<evidence type="ECO:0000250" key="1"/>
<evidence type="ECO:0000250" key="2">
    <source>
        <dbReference type="UniProtKB" id="Q05905"/>
    </source>
</evidence>
<evidence type="ECO:0000305" key="3"/>
<feature type="chain" id="PRO_0000410813" description="Protein HRI1">
    <location>
        <begin position="1"/>
        <end position="244"/>
    </location>
</feature>
<feature type="modified residue" description="Phosphoserine" evidence="2">
    <location>
        <position position="143"/>
    </location>
</feature>
<proteinExistence type="inferred from homology"/>
<keyword id="KW-0963">Cytoplasm</keyword>
<keyword id="KW-0539">Nucleus</keyword>
<keyword id="KW-0597">Phosphoprotein</keyword>
<gene>
    <name type="primary">HRI1</name>
    <name type="ORF">SCRG_04250</name>
</gene>
<name>HRI1_YEAS1</name>
<organism>
    <name type="scientific">Saccharomyces cerevisiae (strain RM11-1a)</name>
    <name type="common">Baker's yeast</name>
    <dbReference type="NCBI Taxonomy" id="285006"/>
    <lineage>
        <taxon>Eukaryota</taxon>
        <taxon>Fungi</taxon>
        <taxon>Dikarya</taxon>
        <taxon>Ascomycota</taxon>
        <taxon>Saccharomycotina</taxon>
        <taxon>Saccharomycetes</taxon>
        <taxon>Saccharomycetales</taxon>
        <taxon>Saccharomycetaceae</taxon>
        <taxon>Saccharomyces</taxon>
    </lineage>
</organism>
<accession>B3RHI0</accession>
<dbReference type="EMBL" id="DS981519">
    <property type="protein sequence ID" value="EDV08624.1"/>
    <property type="molecule type" value="Genomic_DNA"/>
</dbReference>
<dbReference type="SMR" id="B3RHI0"/>
<dbReference type="HOGENOM" id="CLU_097607_0_0_1"/>
<dbReference type="OrthoDB" id="17082at4893"/>
<dbReference type="Proteomes" id="UP000008335">
    <property type="component" value="Unassembled WGS sequence"/>
</dbReference>
<dbReference type="GO" id="GO:0005737">
    <property type="term" value="C:cytoplasm"/>
    <property type="evidence" value="ECO:0007669"/>
    <property type="project" value="UniProtKB-SubCell"/>
</dbReference>
<dbReference type="GO" id="GO:0005634">
    <property type="term" value="C:nucleus"/>
    <property type="evidence" value="ECO:0007669"/>
    <property type="project" value="UniProtKB-SubCell"/>
</dbReference>
<dbReference type="CDD" id="cd11693">
    <property type="entry name" value="HRI1_C_like"/>
    <property type="match status" value="1"/>
</dbReference>
<dbReference type="CDD" id="cd11692">
    <property type="entry name" value="HRI1_N_like"/>
    <property type="match status" value="1"/>
</dbReference>
<dbReference type="Gene3D" id="2.40.128.310">
    <property type="entry name" value="Protein HRI1, C-terminal domain"/>
    <property type="match status" value="1"/>
</dbReference>
<dbReference type="Gene3D" id="2.40.128.320">
    <property type="entry name" value="Protein HRI1, N-terminal domain"/>
    <property type="match status" value="1"/>
</dbReference>
<dbReference type="InterPro" id="IPR031818">
    <property type="entry name" value="Hri1"/>
</dbReference>
<dbReference type="InterPro" id="IPR038744">
    <property type="entry name" value="Hri1_N"/>
</dbReference>
<dbReference type="InterPro" id="IPR043047">
    <property type="entry name" value="Hri1_N_sf"/>
</dbReference>
<dbReference type="Pfam" id="PF16815">
    <property type="entry name" value="HRI1"/>
    <property type="match status" value="1"/>
</dbReference>
<reference key="1">
    <citation type="submission" date="2005-03" db="EMBL/GenBank/DDBJ databases">
        <title>Annotation of the Saccharomyces cerevisiae RM11-1a genome.</title>
        <authorList>
            <consortium name="The Broad Institute Genome Sequencing Platform"/>
            <person name="Birren B.W."/>
            <person name="Lander E.S."/>
            <person name="Galagan J.E."/>
            <person name="Nusbaum C."/>
            <person name="Devon K."/>
            <person name="Cuomo C."/>
            <person name="Jaffe D.B."/>
            <person name="Butler J."/>
            <person name="Alvarez P."/>
            <person name="Gnerre S."/>
            <person name="Grabherr M."/>
            <person name="Kleber M."/>
            <person name="Mauceli E.W."/>
            <person name="Brockman W."/>
            <person name="MacCallum I.A."/>
            <person name="Rounsley S."/>
            <person name="Young S.K."/>
            <person name="LaButti K."/>
            <person name="Pushparaj V."/>
            <person name="DeCaprio D."/>
            <person name="Crawford M."/>
            <person name="Koehrsen M."/>
            <person name="Engels R."/>
            <person name="Montgomery P."/>
            <person name="Pearson M."/>
            <person name="Howarth C."/>
            <person name="Larson L."/>
            <person name="Luoma S."/>
            <person name="White J."/>
            <person name="O'Leary S."/>
            <person name="Kodira C.D."/>
            <person name="Zeng Q."/>
            <person name="Yandava C."/>
            <person name="Alvarado L."/>
            <person name="Pratt S."/>
            <person name="Kruglyak L."/>
        </authorList>
    </citation>
    <scope>NUCLEOTIDE SEQUENCE [LARGE SCALE GENOMIC DNA]</scope>
    <source>
        <strain>RM11-1a</strain>
    </source>
</reference>
<comment type="subunit">
    <text evidence="1">Interacts with HRR25. May interact with SEC72.</text>
</comment>
<comment type="subcellular location">
    <subcellularLocation>
        <location evidence="1">Cytoplasm</location>
    </subcellularLocation>
    <subcellularLocation>
        <location evidence="1">Nucleus</location>
    </subcellularLocation>
</comment>
<comment type="similarity">
    <text evidence="3">Belongs to the HRI1 family.</text>
</comment>
<sequence>MPALLKRLLFQVGPHPNERTFTLSSVSTDGHYISLRPFVKPSGDELSFPFEWAFAGTNETVKVNDQGNGVVTQDFNFWLDTNVYLNVPNTHRGEVNTTWKNWDSGCVEETGAVYPFGADKESVSFRELWQPVDPSREDLVIVSPNNEKFSSNARSIVLKVTDEAYDGLVIVIGRWIQGFLSQKNNNTIEGLNFIRLLEKDSGKSEFLLSYGKEVNKIPQSYENLKKGSTVTSNGLNWEVIEYHA</sequence>
<protein>
    <recommendedName>
        <fullName>Protein HRI1</fullName>
    </recommendedName>
    <alternativeName>
        <fullName>HRR25-interacting protein 1</fullName>
    </alternativeName>
</protein>